<feature type="chain" id="PRO_1000125424" description="ATP-dependent protease ATPase subunit HslU">
    <location>
        <begin position="1"/>
        <end position="435"/>
    </location>
</feature>
<feature type="binding site" evidence="1">
    <location>
        <position position="18"/>
    </location>
    <ligand>
        <name>ATP</name>
        <dbReference type="ChEBI" id="CHEBI:30616"/>
    </ligand>
</feature>
<feature type="binding site" evidence="1">
    <location>
        <begin position="60"/>
        <end position="65"/>
    </location>
    <ligand>
        <name>ATP</name>
        <dbReference type="ChEBI" id="CHEBI:30616"/>
    </ligand>
</feature>
<feature type="binding site" evidence="1">
    <location>
        <position position="248"/>
    </location>
    <ligand>
        <name>ATP</name>
        <dbReference type="ChEBI" id="CHEBI:30616"/>
    </ligand>
</feature>
<feature type="binding site" evidence="1">
    <location>
        <position position="313"/>
    </location>
    <ligand>
        <name>ATP</name>
        <dbReference type="ChEBI" id="CHEBI:30616"/>
    </ligand>
</feature>
<feature type="binding site" evidence="1">
    <location>
        <position position="385"/>
    </location>
    <ligand>
        <name>ATP</name>
        <dbReference type="ChEBI" id="CHEBI:30616"/>
    </ligand>
</feature>
<sequence>MTTFSPREIVSELDRYIIGQNDAKRAVAIALRNRWRRQQLDESLRDEVMPKNILMIGPTGVGKTEISRRLAKLAGAPFIKVEATKFTEVGYVGRDVEQIIRDLVEIGIGLIKEKKRLEVEAKAHAGAEERVLDALVGATASPATRDSFRKKLRAGELDDKEIDIEVAETSSGMPGFEIPGMPGANVGILNLSDMFGKAMGGRTKKVRTTVKTSYADLIRDESDKLIDNEVIQREAVKSVENDGIVFLDEIDKIANREGAMGAGVSREGVQRDLLPLVEGTTVATKYGPVKTDHILFIASGAFHVSKPSDLLPELQGRLPIRVELKALTKEDFRRILTETEASLIRQYIALMATEQLDLEFTEDAIDALADVAVNLNSSIENIGARRLQTVMERVLYDISFNAPDRGGAKVMIDSAYVREHVGEIAADADLSRYIL</sequence>
<organism>
    <name type="scientific">Allorhizobium ampelinum (strain ATCC BAA-846 / DSM 112012 / S4)</name>
    <name type="common">Agrobacterium vitis (strain S4)</name>
    <dbReference type="NCBI Taxonomy" id="311402"/>
    <lineage>
        <taxon>Bacteria</taxon>
        <taxon>Pseudomonadati</taxon>
        <taxon>Pseudomonadota</taxon>
        <taxon>Alphaproteobacteria</taxon>
        <taxon>Hyphomicrobiales</taxon>
        <taxon>Rhizobiaceae</taxon>
        <taxon>Rhizobium/Agrobacterium group</taxon>
        <taxon>Allorhizobium</taxon>
        <taxon>Allorhizobium ampelinum</taxon>
    </lineage>
</organism>
<proteinExistence type="inferred from homology"/>
<reference key="1">
    <citation type="journal article" date="2009" name="J. Bacteriol.">
        <title>Genome sequences of three Agrobacterium biovars help elucidate the evolution of multichromosome genomes in bacteria.</title>
        <authorList>
            <person name="Slater S.C."/>
            <person name="Goldman B.S."/>
            <person name="Goodner B."/>
            <person name="Setubal J.C."/>
            <person name="Farrand S.K."/>
            <person name="Nester E.W."/>
            <person name="Burr T.J."/>
            <person name="Banta L."/>
            <person name="Dickerman A.W."/>
            <person name="Paulsen I."/>
            <person name="Otten L."/>
            <person name="Suen G."/>
            <person name="Welch R."/>
            <person name="Almeida N.F."/>
            <person name="Arnold F."/>
            <person name="Burton O.T."/>
            <person name="Du Z."/>
            <person name="Ewing A."/>
            <person name="Godsy E."/>
            <person name="Heisel S."/>
            <person name="Houmiel K.L."/>
            <person name="Jhaveri J."/>
            <person name="Lu J."/>
            <person name="Miller N.M."/>
            <person name="Norton S."/>
            <person name="Chen Q."/>
            <person name="Phoolcharoen W."/>
            <person name="Ohlin V."/>
            <person name="Ondrusek D."/>
            <person name="Pride N."/>
            <person name="Stricklin S.L."/>
            <person name="Sun J."/>
            <person name="Wheeler C."/>
            <person name="Wilson L."/>
            <person name="Zhu H."/>
            <person name="Wood D.W."/>
        </authorList>
    </citation>
    <scope>NUCLEOTIDE SEQUENCE [LARGE SCALE GENOMIC DNA]</scope>
    <source>
        <strain>ATCC BAA-846 / DSM 112012 / S4</strain>
    </source>
</reference>
<keyword id="KW-0067">ATP-binding</keyword>
<keyword id="KW-0143">Chaperone</keyword>
<keyword id="KW-0963">Cytoplasm</keyword>
<keyword id="KW-0547">Nucleotide-binding</keyword>
<keyword id="KW-1185">Reference proteome</keyword>
<keyword id="KW-0346">Stress response</keyword>
<gene>
    <name evidence="1" type="primary">hslU</name>
    <name type="ordered locus">Avi_0031</name>
</gene>
<dbReference type="EMBL" id="CP000633">
    <property type="protein sequence ID" value="ACM34994.1"/>
    <property type="molecule type" value="Genomic_DNA"/>
</dbReference>
<dbReference type="RefSeq" id="WP_012654524.1">
    <property type="nucleotide sequence ID" value="NC_011989.1"/>
</dbReference>
<dbReference type="SMR" id="B9JXW4"/>
<dbReference type="STRING" id="311402.Avi_0031"/>
<dbReference type="KEGG" id="avi:Avi_0031"/>
<dbReference type="eggNOG" id="COG1220">
    <property type="taxonomic scope" value="Bacteria"/>
</dbReference>
<dbReference type="HOGENOM" id="CLU_033123_0_0_5"/>
<dbReference type="Proteomes" id="UP000001596">
    <property type="component" value="Chromosome 1"/>
</dbReference>
<dbReference type="GO" id="GO:0009376">
    <property type="term" value="C:HslUV protease complex"/>
    <property type="evidence" value="ECO:0007669"/>
    <property type="project" value="UniProtKB-UniRule"/>
</dbReference>
<dbReference type="GO" id="GO:0005524">
    <property type="term" value="F:ATP binding"/>
    <property type="evidence" value="ECO:0007669"/>
    <property type="project" value="UniProtKB-UniRule"/>
</dbReference>
<dbReference type="GO" id="GO:0016887">
    <property type="term" value="F:ATP hydrolysis activity"/>
    <property type="evidence" value="ECO:0007669"/>
    <property type="project" value="InterPro"/>
</dbReference>
<dbReference type="GO" id="GO:0008233">
    <property type="term" value="F:peptidase activity"/>
    <property type="evidence" value="ECO:0007669"/>
    <property type="project" value="InterPro"/>
</dbReference>
<dbReference type="GO" id="GO:0036402">
    <property type="term" value="F:proteasome-activating activity"/>
    <property type="evidence" value="ECO:0007669"/>
    <property type="project" value="UniProtKB-UniRule"/>
</dbReference>
<dbReference type="GO" id="GO:0043335">
    <property type="term" value="P:protein unfolding"/>
    <property type="evidence" value="ECO:0007669"/>
    <property type="project" value="UniProtKB-UniRule"/>
</dbReference>
<dbReference type="GO" id="GO:0051603">
    <property type="term" value="P:proteolysis involved in protein catabolic process"/>
    <property type="evidence" value="ECO:0007669"/>
    <property type="project" value="TreeGrafter"/>
</dbReference>
<dbReference type="CDD" id="cd19498">
    <property type="entry name" value="RecA-like_HslU"/>
    <property type="match status" value="1"/>
</dbReference>
<dbReference type="FunFam" id="3.40.50.300:FF:000213">
    <property type="entry name" value="ATP-dependent protease ATPase subunit HslU"/>
    <property type="match status" value="1"/>
</dbReference>
<dbReference type="FunFam" id="3.40.50.300:FF:000220">
    <property type="entry name" value="ATP-dependent protease ATPase subunit HslU"/>
    <property type="match status" value="1"/>
</dbReference>
<dbReference type="Gene3D" id="1.10.8.60">
    <property type="match status" value="1"/>
</dbReference>
<dbReference type="Gene3D" id="3.40.50.300">
    <property type="entry name" value="P-loop containing nucleotide triphosphate hydrolases"/>
    <property type="match status" value="2"/>
</dbReference>
<dbReference type="HAMAP" id="MF_00249">
    <property type="entry name" value="HslU"/>
    <property type="match status" value="1"/>
</dbReference>
<dbReference type="InterPro" id="IPR003593">
    <property type="entry name" value="AAA+_ATPase"/>
</dbReference>
<dbReference type="InterPro" id="IPR050052">
    <property type="entry name" value="ATP-dep_Clp_protease_ClpX"/>
</dbReference>
<dbReference type="InterPro" id="IPR003959">
    <property type="entry name" value="ATPase_AAA_core"/>
</dbReference>
<dbReference type="InterPro" id="IPR019489">
    <property type="entry name" value="Clp_ATPase_C"/>
</dbReference>
<dbReference type="InterPro" id="IPR004491">
    <property type="entry name" value="HslU"/>
</dbReference>
<dbReference type="InterPro" id="IPR027417">
    <property type="entry name" value="P-loop_NTPase"/>
</dbReference>
<dbReference type="NCBIfam" id="TIGR00390">
    <property type="entry name" value="hslU"/>
    <property type="match status" value="1"/>
</dbReference>
<dbReference type="NCBIfam" id="NF003544">
    <property type="entry name" value="PRK05201.1"/>
    <property type="match status" value="1"/>
</dbReference>
<dbReference type="PANTHER" id="PTHR48102">
    <property type="entry name" value="ATP-DEPENDENT CLP PROTEASE ATP-BINDING SUBUNIT CLPX-LIKE, MITOCHONDRIAL-RELATED"/>
    <property type="match status" value="1"/>
</dbReference>
<dbReference type="PANTHER" id="PTHR48102:SF3">
    <property type="entry name" value="ATP-DEPENDENT PROTEASE ATPASE SUBUNIT HSLU"/>
    <property type="match status" value="1"/>
</dbReference>
<dbReference type="Pfam" id="PF00004">
    <property type="entry name" value="AAA"/>
    <property type="match status" value="1"/>
</dbReference>
<dbReference type="Pfam" id="PF07724">
    <property type="entry name" value="AAA_2"/>
    <property type="match status" value="1"/>
</dbReference>
<dbReference type="SMART" id="SM00382">
    <property type="entry name" value="AAA"/>
    <property type="match status" value="1"/>
</dbReference>
<dbReference type="SMART" id="SM01086">
    <property type="entry name" value="ClpB_D2-small"/>
    <property type="match status" value="1"/>
</dbReference>
<dbReference type="SUPFAM" id="SSF52540">
    <property type="entry name" value="P-loop containing nucleoside triphosphate hydrolases"/>
    <property type="match status" value="1"/>
</dbReference>
<comment type="function">
    <text evidence="1">ATPase subunit of a proteasome-like degradation complex; this subunit has chaperone activity. The binding of ATP and its subsequent hydrolysis by HslU are essential for unfolding of protein substrates subsequently hydrolyzed by HslV. HslU recognizes the N-terminal part of its protein substrates and unfolds these before they are guided to HslV for hydrolysis.</text>
</comment>
<comment type="subunit">
    <text evidence="1">A double ring-shaped homohexamer of HslV is capped on each side by a ring-shaped HslU homohexamer. The assembly of the HslU/HslV complex is dependent on binding of ATP.</text>
</comment>
<comment type="subcellular location">
    <subcellularLocation>
        <location evidence="1">Cytoplasm</location>
    </subcellularLocation>
</comment>
<comment type="similarity">
    <text evidence="1">Belongs to the ClpX chaperone family. HslU subfamily.</text>
</comment>
<accession>B9JXW4</accession>
<protein>
    <recommendedName>
        <fullName evidence="1">ATP-dependent protease ATPase subunit HslU</fullName>
    </recommendedName>
    <alternativeName>
        <fullName evidence="1">Unfoldase HslU</fullName>
    </alternativeName>
</protein>
<evidence type="ECO:0000255" key="1">
    <source>
        <dbReference type="HAMAP-Rule" id="MF_00249"/>
    </source>
</evidence>
<name>HSLU_ALLAM</name>